<sequence length="147" mass="16207">MRLEDLRPTPGAMKKRKRVGRGPGSGHGKTSGRGHKGQKARGSGKVHIWFEGGQTPLHRRLPKRGFNNINKKVYAVVNVKVLEERFEANEEVTPEKLIERKIIKDLKDGIKILGDGELTKPLVVKAHAFSKSAVEKIESAGGKAEVI</sequence>
<reference key="1">
    <citation type="journal article" date="2011" name="J. Bacteriol.">
        <title>Genome sequence of Thermotoga sp. strain RQ2, a hyperthermophilic bacterium isolated from a geothermally heated region of the seafloor near Ribeira Quente, the Azores.</title>
        <authorList>
            <person name="Swithers K.S."/>
            <person name="DiPippo J.L."/>
            <person name="Bruce D.C."/>
            <person name="Detter C."/>
            <person name="Tapia R."/>
            <person name="Han S."/>
            <person name="Saunders E."/>
            <person name="Goodwin L.A."/>
            <person name="Han J."/>
            <person name="Woyke T."/>
            <person name="Pitluck S."/>
            <person name="Pennacchio L."/>
            <person name="Nolan M."/>
            <person name="Mikhailova N."/>
            <person name="Lykidis A."/>
            <person name="Land M.L."/>
            <person name="Brettin T."/>
            <person name="Stetter K.O."/>
            <person name="Nelson K.E."/>
            <person name="Gogarten J.P."/>
            <person name="Noll K.M."/>
        </authorList>
    </citation>
    <scope>NUCLEOTIDE SEQUENCE [LARGE SCALE GENOMIC DNA]</scope>
    <source>
        <strain>RQ2</strain>
    </source>
</reference>
<feature type="chain" id="PRO_1000142895" description="Large ribosomal subunit protein uL15">
    <location>
        <begin position="1"/>
        <end position="147"/>
    </location>
</feature>
<feature type="region of interest" description="Disordered" evidence="2">
    <location>
        <begin position="1"/>
        <end position="45"/>
    </location>
</feature>
<feature type="compositionally biased region" description="Basic residues" evidence="2">
    <location>
        <begin position="30"/>
        <end position="44"/>
    </location>
</feature>
<gene>
    <name evidence="1" type="primary">rplO</name>
    <name type="ordered locus">TRQ2_1375</name>
</gene>
<keyword id="KW-0687">Ribonucleoprotein</keyword>
<keyword id="KW-0689">Ribosomal protein</keyword>
<keyword id="KW-0694">RNA-binding</keyword>
<keyword id="KW-0699">rRNA-binding</keyword>
<protein>
    <recommendedName>
        <fullName evidence="1">Large ribosomal subunit protein uL15</fullName>
    </recommendedName>
    <alternativeName>
        <fullName evidence="3">50S ribosomal protein L15</fullName>
    </alternativeName>
</protein>
<organism>
    <name type="scientific">Thermotoga sp. (strain RQ2)</name>
    <dbReference type="NCBI Taxonomy" id="126740"/>
    <lineage>
        <taxon>Bacteria</taxon>
        <taxon>Thermotogati</taxon>
        <taxon>Thermotogota</taxon>
        <taxon>Thermotogae</taxon>
        <taxon>Thermotogales</taxon>
        <taxon>Thermotogaceae</taxon>
        <taxon>Thermotoga</taxon>
    </lineage>
</organism>
<comment type="function">
    <text evidence="1">Binds to the 23S rRNA.</text>
</comment>
<comment type="subunit">
    <text evidence="1">Part of the 50S ribosomal subunit.</text>
</comment>
<comment type="similarity">
    <text evidence="1">Belongs to the universal ribosomal protein uL15 family.</text>
</comment>
<name>RL15_THESQ</name>
<evidence type="ECO:0000255" key="1">
    <source>
        <dbReference type="HAMAP-Rule" id="MF_01341"/>
    </source>
</evidence>
<evidence type="ECO:0000256" key="2">
    <source>
        <dbReference type="SAM" id="MobiDB-lite"/>
    </source>
</evidence>
<evidence type="ECO:0000305" key="3"/>
<dbReference type="EMBL" id="CP000969">
    <property type="protein sequence ID" value="ACB09719.1"/>
    <property type="molecule type" value="Genomic_DNA"/>
</dbReference>
<dbReference type="RefSeq" id="WP_011943796.1">
    <property type="nucleotide sequence ID" value="NC_010483.1"/>
</dbReference>
<dbReference type="SMR" id="B1LBM1"/>
<dbReference type="KEGG" id="trq:TRQ2_1375"/>
<dbReference type="HOGENOM" id="CLU_055188_4_2_0"/>
<dbReference type="Proteomes" id="UP000001687">
    <property type="component" value="Chromosome"/>
</dbReference>
<dbReference type="GO" id="GO:0022625">
    <property type="term" value="C:cytosolic large ribosomal subunit"/>
    <property type="evidence" value="ECO:0007669"/>
    <property type="project" value="TreeGrafter"/>
</dbReference>
<dbReference type="GO" id="GO:0019843">
    <property type="term" value="F:rRNA binding"/>
    <property type="evidence" value="ECO:0007669"/>
    <property type="project" value="UniProtKB-UniRule"/>
</dbReference>
<dbReference type="GO" id="GO:0003735">
    <property type="term" value="F:structural constituent of ribosome"/>
    <property type="evidence" value="ECO:0007669"/>
    <property type="project" value="InterPro"/>
</dbReference>
<dbReference type="GO" id="GO:0006412">
    <property type="term" value="P:translation"/>
    <property type="evidence" value="ECO:0007669"/>
    <property type="project" value="UniProtKB-UniRule"/>
</dbReference>
<dbReference type="FunFam" id="3.100.10.10:FF:000005">
    <property type="entry name" value="50S ribosomal protein L15"/>
    <property type="match status" value="1"/>
</dbReference>
<dbReference type="Gene3D" id="3.100.10.10">
    <property type="match status" value="1"/>
</dbReference>
<dbReference type="HAMAP" id="MF_01341">
    <property type="entry name" value="Ribosomal_uL15"/>
    <property type="match status" value="1"/>
</dbReference>
<dbReference type="InterPro" id="IPR030878">
    <property type="entry name" value="Ribosomal_uL15"/>
</dbReference>
<dbReference type="InterPro" id="IPR021131">
    <property type="entry name" value="Ribosomal_uL15/eL18"/>
</dbReference>
<dbReference type="InterPro" id="IPR036227">
    <property type="entry name" value="Ribosomal_uL15/eL18_sf"/>
</dbReference>
<dbReference type="InterPro" id="IPR005749">
    <property type="entry name" value="Ribosomal_uL15_bac-type"/>
</dbReference>
<dbReference type="InterPro" id="IPR001196">
    <property type="entry name" value="Ribosomal_uL15_CS"/>
</dbReference>
<dbReference type="NCBIfam" id="TIGR01071">
    <property type="entry name" value="rplO_bact"/>
    <property type="match status" value="1"/>
</dbReference>
<dbReference type="PANTHER" id="PTHR12934">
    <property type="entry name" value="50S RIBOSOMAL PROTEIN L15"/>
    <property type="match status" value="1"/>
</dbReference>
<dbReference type="PANTHER" id="PTHR12934:SF11">
    <property type="entry name" value="LARGE RIBOSOMAL SUBUNIT PROTEIN UL15M"/>
    <property type="match status" value="1"/>
</dbReference>
<dbReference type="Pfam" id="PF00828">
    <property type="entry name" value="Ribosomal_L27A"/>
    <property type="match status" value="1"/>
</dbReference>
<dbReference type="SUPFAM" id="SSF52080">
    <property type="entry name" value="Ribosomal proteins L15p and L18e"/>
    <property type="match status" value="1"/>
</dbReference>
<dbReference type="PROSITE" id="PS00475">
    <property type="entry name" value="RIBOSOMAL_L15"/>
    <property type="match status" value="1"/>
</dbReference>
<accession>B1LBM1</accession>
<proteinExistence type="inferred from homology"/>